<organism>
    <name type="scientific">Vibrio anguillarum (strain ATCC 68554 / 775)</name>
    <name type="common">Listonella anguillarum</name>
    <dbReference type="NCBI Taxonomy" id="882102"/>
    <lineage>
        <taxon>Bacteria</taxon>
        <taxon>Pseudomonadati</taxon>
        <taxon>Pseudomonadota</taxon>
        <taxon>Gammaproteobacteria</taxon>
        <taxon>Vibrionales</taxon>
        <taxon>Vibrionaceae</taxon>
        <taxon>Vibrio</taxon>
    </lineage>
</organism>
<evidence type="ECO:0000255" key="1">
    <source>
        <dbReference type="HAMAP-Rule" id="MF_01718"/>
    </source>
</evidence>
<evidence type="ECO:0000305" key="2"/>
<evidence type="ECO:0000305" key="3">
    <source>
    </source>
</evidence>
<protein>
    <recommendedName>
        <fullName evidence="1">Hemin import ATP-binding protein HmuV</fullName>
        <ecNumber evidence="1">7.6.2.-</ecNumber>
    </recommendedName>
</protein>
<name>HMUV_VIBA7</name>
<dbReference type="EC" id="7.6.2.-" evidence="1"/>
<dbReference type="EMBL" id="AJ496544">
    <property type="protein sequence ID" value="CAF25489.1"/>
    <property type="status" value="ALT_INIT"/>
    <property type="molecule type" value="Genomic_DNA"/>
</dbReference>
<dbReference type="EMBL" id="CP002284">
    <property type="protein sequence ID" value="AEH33069.1"/>
    <property type="molecule type" value="Genomic_DNA"/>
</dbReference>
<dbReference type="RefSeq" id="WP_013856730.1">
    <property type="nucleotide sequence ID" value="NC_015633.1"/>
</dbReference>
<dbReference type="SMR" id="Q70YG7"/>
<dbReference type="KEGG" id="van:VAA_01383"/>
<dbReference type="PATRIC" id="fig|882102.3.peg.1483"/>
<dbReference type="eggNOG" id="COG4559">
    <property type="taxonomic scope" value="Bacteria"/>
</dbReference>
<dbReference type="HOGENOM" id="CLU_000604_1_11_6"/>
<dbReference type="GO" id="GO:0005886">
    <property type="term" value="C:plasma membrane"/>
    <property type="evidence" value="ECO:0007669"/>
    <property type="project" value="UniProtKB-SubCell"/>
</dbReference>
<dbReference type="GO" id="GO:0005524">
    <property type="term" value="F:ATP binding"/>
    <property type="evidence" value="ECO:0007669"/>
    <property type="project" value="UniProtKB-KW"/>
</dbReference>
<dbReference type="GO" id="GO:0016887">
    <property type="term" value="F:ATP hydrolysis activity"/>
    <property type="evidence" value="ECO:0007669"/>
    <property type="project" value="InterPro"/>
</dbReference>
<dbReference type="CDD" id="cd03214">
    <property type="entry name" value="ABC_Iron-Siderophores_B12_Hemin"/>
    <property type="match status" value="1"/>
</dbReference>
<dbReference type="Gene3D" id="3.40.50.300">
    <property type="entry name" value="P-loop containing nucleotide triphosphate hydrolases"/>
    <property type="match status" value="1"/>
</dbReference>
<dbReference type="InterPro" id="IPR003593">
    <property type="entry name" value="AAA+_ATPase"/>
</dbReference>
<dbReference type="InterPro" id="IPR003439">
    <property type="entry name" value="ABC_transporter-like_ATP-bd"/>
</dbReference>
<dbReference type="InterPro" id="IPR027417">
    <property type="entry name" value="P-loop_NTPase"/>
</dbReference>
<dbReference type="NCBIfam" id="NF010068">
    <property type="entry name" value="PRK13548.1"/>
    <property type="match status" value="1"/>
</dbReference>
<dbReference type="PANTHER" id="PTHR42794">
    <property type="entry name" value="HEMIN IMPORT ATP-BINDING PROTEIN HMUV"/>
    <property type="match status" value="1"/>
</dbReference>
<dbReference type="PANTHER" id="PTHR42794:SF1">
    <property type="entry name" value="HEMIN IMPORT ATP-BINDING PROTEIN HMUV"/>
    <property type="match status" value="1"/>
</dbReference>
<dbReference type="Pfam" id="PF00005">
    <property type="entry name" value="ABC_tran"/>
    <property type="match status" value="1"/>
</dbReference>
<dbReference type="SMART" id="SM00382">
    <property type="entry name" value="AAA"/>
    <property type="match status" value="1"/>
</dbReference>
<dbReference type="SUPFAM" id="SSF52540">
    <property type="entry name" value="P-loop containing nucleoside triphosphate hydrolases"/>
    <property type="match status" value="1"/>
</dbReference>
<dbReference type="PROSITE" id="PS50893">
    <property type="entry name" value="ABC_TRANSPORTER_2"/>
    <property type="match status" value="1"/>
</dbReference>
<dbReference type="PROSITE" id="PS51261">
    <property type="entry name" value="HMUV"/>
    <property type="match status" value="1"/>
</dbReference>
<keyword id="KW-0067">ATP-binding</keyword>
<keyword id="KW-0997">Cell inner membrane</keyword>
<keyword id="KW-1003">Cell membrane</keyword>
<keyword id="KW-0472">Membrane</keyword>
<keyword id="KW-0547">Nucleotide-binding</keyword>
<keyword id="KW-1278">Translocase</keyword>
<keyword id="KW-0813">Transport</keyword>
<comment type="function">
    <text evidence="3">Part of the ABC transporter complex HmuTUV involved in hemin import. Responsible for energy coupling to the transport system (Probable).</text>
</comment>
<comment type="subunit">
    <text evidence="1">The complex is composed of two ATP-binding proteins (HmuV), two transmembrane proteins (HmuU) and a solute-binding protein (HmuT).</text>
</comment>
<comment type="subcellular location">
    <subcellularLocation>
        <location evidence="1">Cell inner membrane</location>
        <topology evidence="1">Peripheral membrane protein</topology>
    </subcellularLocation>
</comment>
<comment type="similarity">
    <text evidence="1">Belongs to the ABC transporter superfamily. Heme (hemin) importer (TC 3.A.1.14.5) family.</text>
</comment>
<comment type="sequence caution" evidence="2">
    <conflict type="erroneous initiation">
        <sequence resource="EMBL-CDS" id="CAF25489"/>
    </conflict>
    <text>Truncated N-terminus.</text>
</comment>
<proteinExistence type="evidence at protein level"/>
<gene>
    <name evidence="1" type="primary">hmuV</name>
    <name type="ordered locus">VAA_01383</name>
</gene>
<sequence length="260" mass="28484">MSTTAAIQASNISVTFGHRTILDKIDIEIFSGQVTALLGPNGAGKSTLLKILSGEISSTGKMAYFGVPQALWQPNELAKHLAILPQQSTLSFPFIAQEVVELGALPLNLSHQQVSEVALHYMQQTDISDRANNLYPALSGGEKQRLHLARVLTQLHHSGDKKILMLDEPTSALDLAHQHNTLRIARSLAHQEQCAVVVVLHDLNLAAQYADRMVMLHNGKLVCDAPPWEALNAERIEQVYGYSSLVAAHPTMDFPMVYPI</sequence>
<reference key="1">
    <citation type="journal article" date="2004" name="J. Bacteriol.">
        <title>Characterization of heme uptake cluster genes in the fish pathogen Vibrio anguillarum.</title>
        <authorList>
            <person name="Mourino S."/>
            <person name="Osorio C.R."/>
            <person name="Lemos M.L."/>
        </authorList>
    </citation>
    <scope>NUCLEOTIDE SEQUENCE [GENOMIC DNA]</scope>
    <scope>FUNCTION IN HEMIN TRANSPORT</scope>
    <source>
        <strain>ATCC 68554 / 775 / H775-3</strain>
    </source>
</reference>
<reference key="2">
    <citation type="journal article" date="2011" name="Infect. Immun.">
        <title>Complete genome sequence of the marine fish pathogen Vibrio anguillarum harboring the pJM1 virulence plasmid and genomic comparison with other virulent strains of V. anguillarum and V. ordalii.</title>
        <authorList>
            <person name="Naka H."/>
            <person name="Dias G.M."/>
            <person name="Thompson C.C."/>
            <person name="Dubay C."/>
            <person name="Thompson F.L."/>
            <person name="Crosa J.H."/>
        </authorList>
    </citation>
    <scope>NUCLEOTIDE SEQUENCE [LARGE SCALE GENOMIC DNA]</scope>
    <source>
        <strain>ATCC 68554 / 775</strain>
    </source>
</reference>
<feature type="chain" id="PRO_0000269635" description="Hemin import ATP-binding protein HmuV">
    <location>
        <begin position="1"/>
        <end position="260"/>
    </location>
</feature>
<feature type="domain" description="ABC transporter" evidence="1">
    <location>
        <begin position="7"/>
        <end position="243"/>
    </location>
</feature>
<feature type="binding site" evidence="1">
    <location>
        <begin position="39"/>
        <end position="46"/>
    </location>
    <ligand>
        <name>ATP</name>
        <dbReference type="ChEBI" id="CHEBI:30616"/>
    </ligand>
</feature>
<accession>Q70YG7</accession>
<accession>F7YI33</accession>